<gene>
    <name evidence="1" type="primary">rplK</name>
    <name type="ordered locus">NGR_c11780</name>
</gene>
<name>RL11_SINFN</name>
<sequence>MAKKVAGQLKLQVKAGSANPSPPIGPALGQRGINIMEFCKAFNAATQEMEKGMPIPVVITYYQDKSFTFIMKQPPVSYFLKREAKIQSGSKTPGKAKAGSISKAQIRTIAEAKMKDLNAADIEGAMAMVEGSARSMGLEVTG</sequence>
<feature type="chain" id="PRO_1000195699" description="Large ribosomal subunit protein uL11">
    <location>
        <begin position="1"/>
        <end position="142"/>
    </location>
</feature>
<organism>
    <name type="scientific">Sinorhizobium fredii (strain NBRC 101917 / NGR234)</name>
    <dbReference type="NCBI Taxonomy" id="394"/>
    <lineage>
        <taxon>Bacteria</taxon>
        <taxon>Pseudomonadati</taxon>
        <taxon>Pseudomonadota</taxon>
        <taxon>Alphaproteobacteria</taxon>
        <taxon>Hyphomicrobiales</taxon>
        <taxon>Rhizobiaceae</taxon>
        <taxon>Sinorhizobium/Ensifer group</taxon>
        <taxon>Sinorhizobium</taxon>
    </lineage>
</organism>
<protein>
    <recommendedName>
        <fullName evidence="1">Large ribosomal subunit protein uL11</fullName>
    </recommendedName>
    <alternativeName>
        <fullName evidence="2">50S ribosomal protein L11</fullName>
    </alternativeName>
</protein>
<keyword id="KW-0488">Methylation</keyword>
<keyword id="KW-1185">Reference proteome</keyword>
<keyword id="KW-0687">Ribonucleoprotein</keyword>
<keyword id="KW-0689">Ribosomal protein</keyword>
<keyword id="KW-0694">RNA-binding</keyword>
<keyword id="KW-0699">rRNA-binding</keyword>
<evidence type="ECO:0000255" key="1">
    <source>
        <dbReference type="HAMAP-Rule" id="MF_00736"/>
    </source>
</evidence>
<evidence type="ECO:0000305" key="2"/>
<proteinExistence type="inferred from homology"/>
<reference key="1">
    <citation type="journal article" date="2009" name="Appl. Environ. Microbiol.">
        <title>Rhizobium sp. strain NGR234 possesses a remarkable number of secretion systems.</title>
        <authorList>
            <person name="Schmeisser C."/>
            <person name="Liesegang H."/>
            <person name="Krysciak D."/>
            <person name="Bakkou N."/>
            <person name="Le Quere A."/>
            <person name="Wollherr A."/>
            <person name="Heinemeyer I."/>
            <person name="Morgenstern B."/>
            <person name="Pommerening-Roeser A."/>
            <person name="Flores M."/>
            <person name="Palacios R."/>
            <person name="Brenner S."/>
            <person name="Gottschalk G."/>
            <person name="Schmitz R.A."/>
            <person name="Broughton W.J."/>
            <person name="Perret X."/>
            <person name="Strittmatter A.W."/>
            <person name="Streit W.R."/>
        </authorList>
    </citation>
    <scope>NUCLEOTIDE SEQUENCE [LARGE SCALE GENOMIC DNA]</scope>
    <source>
        <strain>NBRC 101917 / NGR234</strain>
    </source>
</reference>
<dbReference type="EMBL" id="CP001389">
    <property type="protein sequence ID" value="ACP24960.1"/>
    <property type="molecule type" value="Genomic_DNA"/>
</dbReference>
<dbReference type="RefSeq" id="WP_012707743.1">
    <property type="nucleotide sequence ID" value="NC_012587.1"/>
</dbReference>
<dbReference type="RefSeq" id="YP_002825713.1">
    <property type="nucleotide sequence ID" value="NC_012587.1"/>
</dbReference>
<dbReference type="SMR" id="C3MAW7"/>
<dbReference type="STRING" id="394.NGR_c11780"/>
<dbReference type="GeneID" id="48972669"/>
<dbReference type="KEGG" id="rhi:NGR_c11780"/>
<dbReference type="PATRIC" id="fig|394.7.peg.3994"/>
<dbReference type="eggNOG" id="COG0080">
    <property type="taxonomic scope" value="Bacteria"/>
</dbReference>
<dbReference type="HOGENOM" id="CLU_074237_2_0_5"/>
<dbReference type="OrthoDB" id="9802408at2"/>
<dbReference type="Proteomes" id="UP000001054">
    <property type="component" value="Chromosome"/>
</dbReference>
<dbReference type="GO" id="GO:0022625">
    <property type="term" value="C:cytosolic large ribosomal subunit"/>
    <property type="evidence" value="ECO:0007669"/>
    <property type="project" value="TreeGrafter"/>
</dbReference>
<dbReference type="GO" id="GO:0070180">
    <property type="term" value="F:large ribosomal subunit rRNA binding"/>
    <property type="evidence" value="ECO:0007669"/>
    <property type="project" value="UniProtKB-UniRule"/>
</dbReference>
<dbReference type="GO" id="GO:0003735">
    <property type="term" value="F:structural constituent of ribosome"/>
    <property type="evidence" value="ECO:0007669"/>
    <property type="project" value="InterPro"/>
</dbReference>
<dbReference type="GO" id="GO:0006412">
    <property type="term" value="P:translation"/>
    <property type="evidence" value="ECO:0007669"/>
    <property type="project" value="UniProtKB-UniRule"/>
</dbReference>
<dbReference type="CDD" id="cd00349">
    <property type="entry name" value="Ribosomal_L11"/>
    <property type="match status" value="1"/>
</dbReference>
<dbReference type="FunFam" id="1.10.10.250:FF:000001">
    <property type="entry name" value="50S ribosomal protein L11"/>
    <property type="match status" value="1"/>
</dbReference>
<dbReference type="FunFam" id="3.30.1550.10:FF:000001">
    <property type="entry name" value="50S ribosomal protein L11"/>
    <property type="match status" value="1"/>
</dbReference>
<dbReference type="Gene3D" id="1.10.10.250">
    <property type="entry name" value="Ribosomal protein L11, C-terminal domain"/>
    <property type="match status" value="1"/>
</dbReference>
<dbReference type="Gene3D" id="3.30.1550.10">
    <property type="entry name" value="Ribosomal protein L11/L12, N-terminal domain"/>
    <property type="match status" value="1"/>
</dbReference>
<dbReference type="HAMAP" id="MF_00736">
    <property type="entry name" value="Ribosomal_uL11"/>
    <property type="match status" value="1"/>
</dbReference>
<dbReference type="InterPro" id="IPR000911">
    <property type="entry name" value="Ribosomal_uL11"/>
</dbReference>
<dbReference type="InterPro" id="IPR006519">
    <property type="entry name" value="Ribosomal_uL11_bac-typ"/>
</dbReference>
<dbReference type="InterPro" id="IPR020783">
    <property type="entry name" value="Ribosomal_uL11_C"/>
</dbReference>
<dbReference type="InterPro" id="IPR036769">
    <property type="entry name" value="Ribosomal_uL11_C_sf"/>
</dbReference>
<dbReference type="InterPro" id="IPR020784">
    <property type="entry name" value="Ribosomal_uL11_N"/>
</dbReference>
<dbReference type="InterPro" id="IPR036796">
    <property type="entry name" value="Ribosomal_uL11_N_sf"/>
</dbReference>
<dbReference type="NCBIfam" id="TIGR01632">
    <property type="entry name" value="L11_bact"/>
    <property type="match status" value="1"/>
</dbReference>
<dbReference type="PANTHER" id="PTHR11661">
    <property type="entry name" value="60S RIBOSOMAL PROTEIN L12"/>
    <property type="match status" value="1"/>
</dbReference>
<dbReference type="PANTHER" id="PTHR11661:SF1">
    <property type="entry name" value="LARGE RIBOSOMAL SUBUNIT PROTEIN UL11M"/>
    <property type="match status" value="1"/>
</dbReference>
<dbReference type="Pfam" id="PF00298">
    <property type="entry name" value="Ribosomal_L11"/>
    <property type="match status" value="1"/>
</dbReference>
<dbReference type="Pfam" id="PF03946">
    <property type="entry name" value="Ribosomal_L11_N"/>
    <property type="match status" value="1"/>
</dbReference>
<dbReference type="SMART" id="SM00649">
    <property type="entry name" value="RL11"/>
    <property type="match status" value="1"/>
</dbReference>
<dbReference type="SUPFAM" id="SSF54747">
    <property type="entry name" value="Ribosomal L11/L12e N-terminal domain"/>
    <property type="match status" value="1"/>
</dbReference>
<dbReference type="SUPFAM" id="SSF46906">
    <property type="entry name" value="Ribosomal protein L11, C-terminal domain"/>
    <property type="match status" value="1"/>
</dbReference>
<comment type="function">
    <text evidence="1">Forms part of the ribosomal stalk which helps the ribosome interact with GTP-bound translation factors.</text>
</comment>
<comment type="subunit">
    <text evidence="1">Part of the ribosomal stalk of the 50S ribosomal subunit. Interacts with L10 and the large rRNA to form the base of the stalk. L10 forms an elongated spine to which L12 dimers bind in a sequential fashion forming a multimeric L10(L12)X complex.</text>
</comment>
<comment type="PTM">
    <text evidence="1">One or more lysine residues are methylated.</text>
</comment>
<comment type="similarity">
    <text evidence="1">Belongs to the universal ribosomal protein uL11 family.</text>
</comment>
<accession>C3MAW7</accession>